<sequence length="189" mass="21372">MKKYSKKDRQMKLQVAIEENPFITDEQLAEKFGVIVQTIRLDRVALSIPELRERIKHVASVNYADAVKSLPIDEVIGEIIDIQLSKSAISIFDVRSEHVFKRNKIARGHHLFAQANSLATAVIPNELALTTQATVRFVRSVYEGERIIAKAKVRPATDNRAITIVDVKSYVGDEIVLKGKFEMYHATQK</sequence>
<dbReference type="EMBL" id="AL596170">
    <property type="protein sequence ID" value="CAC97154.1"/>
    <property type="molecule type" value="Genomic_DNA"/>
</dbReference>
<dbReference type="PIR" id="AB1673">
    <property type="entry name" value="AB1673"/>
</dbReference>
<dbReference type="RefSeq" id="WP_010991021.1">
    <property type="nucleotide sequence ID" value="NC_003212.1"/>
</dbReference>
<dbReference type="SMR" id="Q92AJ8"/>
<dbReference type="STRING" id="272626.gene:17566282"/>
<dbReference type="KEGG" id="lin:lin1924"/>
<dbReference type="eggNOG" id="COG2050">
    <property type="taxonomic scope" value="Bacteria"/>
</dbReference>
<dbReference type="HOGENOM" id="CLU_095708_0_0_9"/>
<dbReference type="OrthoDB" id="1706183at2"/>
<dbReference type="Proteomes" id="UP000002513">
    <property type="component" value="Chromosome"/>
</dbReference>
<dbReference type="GO" id="GO:0003677">
    <property type="term" value="F:DNA binding"/>
    <property type="evidence" value="ECO:0007669"/>
    <property type="project" value="UniProtKB-KW"/>
</dbReference>
<dbReference type="GO" id="GO:0003700">
    <property type="term" value="F:DNA-binding transcription factor activity"/>
    <property type="evidence" value="ECO:0007669"/>
    <property type="project" value="UniProtKB-UniRule"/>
</dbReference>
<dbReference type="GO" id="GO:0006633">
    <property type="term" value="P:fatty acid biosynthetic process"/>
    <property type="evidence" value="ECO:0007669"/>
    <property type="project" value="UniProtKB-KW"/>
</dbReference>
<dbReference type="GO" id="GO:0045892">
    <property type="term" value="P:negative regulation of DNA-templated transcription"/>
    <property type="evidence" value="ECO:0007669"/>
    <property type="project" value="UniProtKB-UniRule"/>
</dbReference>
<dbReference type="GO" id="GO:0045717">
    <property type="term" value="P:negative regulation of fatty acid biosynthetic process"/>
    <property type="evidence" value="ECO:0007669"/>
    <property type="project" value="UniProtKB-UniRule"/>
</dbReference>
<dbReference type="CDD" id="cd03440">
    <property type="entry name" value="hot_dog"/>
    <property type="match status" value="1"/>
</dbReference>
<dbReference type="Gene3D" id="3.10.129.10">
    <property type="entry name" value="Hotdog Thioesterase"/>
    <property type="match status" value="1"/>
</dbReference>
<dbReference type="Gene3D" id="1.10.10.10">
    <property type="entry name" value="Winged helix-like DNA-binding domain superfamily/Winged helix DNA-binding domain"/>
    <property type="match status" value="1"/>
</dbReference>
<dbReference type="HAMAP" id="MF_01814">
    <property type="entry name" value="Transcrip_fact_FapR"/>
    <property type="match status" value="1"/>
</dbReference>
<dbReference type="InterPro" id="IPR029069">
    <property type="entry name" value="HotDog_dom_sf"/>
</dbReference>
<dbReference type="InterPro" id="IPR017275">
    <property type="entry name" value="Transcription_factor_FapR"/>
</dbReference>
<dbReference type="InterPro" id="IPR036388">
    <property type="entry name" value="WH-like_DNA-bd_sf"/>
</dbReference>
<dbReference type="NCBIfam" id="NF003359">
    <property type="entry name" value="PRK04424.1"/>
    <property type="match status" value="1"/>
</dbReference>
<dbReference type="PIRSF" id="PIRSF037733">
    <property type="entry name" value="Transcription_factor_FapR"/>
    <property type="match status" value="1"/>
</dbReference>
<dbReference type="SUPFAM" id="SSF54637">
    <property type="entry name" value="Thioesterase/thiol ester dehydrase-isomerase"/>
    <property type="match status" value="1"/>
</dbReference>
<gene>
    <name evidence="1" type="primary">fapR</name>
    <name type="ordered locus">lin1924</name>
</gene>
<accession>Q92AJ8</accession>
<reference key="1">
    <citation type="journal article" date="2001" name="Science">
        <title>Comparative genomics of Listeria species.</title>
        <authorList>
            <person name="Glaser P."/>
            <person name="Frangeul L."/>
            <person name="Buchrieser C."/>
            <person name="Rusniok C."/>
            <person name="Amend A."/>
            <person name="Baquero F."/>
            <person name="Berche P."/>
            <person name="Bloecker H."/>
            <person name="Brandt P."/>
            <person name="Chakraborty T."/>
            <person name="Charbit A."/>
            <person name="Chetouani F."/>
            <person name="Couve E."/>
            <person name="de Daruvar A."/>
            <person name="Dehoux P."/>
            <person name="Domann E."/>
            <person name="Dominguez-Bernal G."/>
            <person name="Duchaud E."/>
            <person name="Durant L."/>
            <person name="Dussurget O."/>
            <person name="Entian K.-D."/>
            <person name="Fsihi H."/>
            <person name="Garcia-del Portillo F."/>
            <person name="Garrido P."/>
            <person name="Gautier L."/>
            <person name="Goebel W."/>
            <person name="Gomez-Lopez N."/>
            <person name="Hain T."/>
            <person name="Hauf J."/>
            <person name="Jackson D."/>
            <person name="Jones L.-M."/>
            <person name="Kaerst U."/>
            <person name="Kreft J."/>
            <person name="Kuhn M."/>
            <person name="Kunst F."/>
            <person name="Kurapkat G."/>
            <person name="Madueno E."/>
            <person name="Maitournam A."/>
            <person name="Mata Vicente J."/>
            <person name="Ng E."/>
            <person name="Nedjari H."/>
            <person name="Nordsiek G."/>
            <person name="Novella S."/>
            <person name="de Pablos B."/>
            <person name="Perez-Diaz J.-C."/>
            <person name="Purcell R."/>
            <person name="Remmel B."/>
            <person name="Rose M."/>
            <person name="Schlueter T."/>
            <person name="Simoes N."/>
            <person name="Tierrez A."/>
            <person name="Vazquez-Boland J.-A."/>
            <person name="Voss H."/>
            <person name="Wehland J."/>
            <person name="Cossart P."/>
        </authorList>
    </citation>
    <scope>NUCLEOTIDE SEQUENCE [LARGE SCALE GENOMIC DNA]</scope>
    <source>
        <strain>ATCC BAA-680 / CLIP 11262</strain>
    </source>
</reference>
<protein>
    <recommendedName>
        <fullName evidence="1">Transcription factor FapR</fullName>
    </recommendedName>
    <alternativeName>
        <fullName evidence="1">Fatty acid and phospholipid biosynthesis regulator</fullName>
    </alternativeName>
</protein>
<keyword id="KW-0238">DNA-binding</keyword>
<keyword id="KW-0275">Fatty acid biosynthesis</keyword>
<keyword id="KW-0276">Fatty acid metabolism</keyword>
<keyword id="KW-0444">Lipid biosynthesis</keyword>
<keyword id="KW-0443">Lipid metabolism</keyword>
<keyword id="KW-0678">Repressor</keyword>
<keyword id="KW-0804">Transcription</keyword>
<keyword id="KW-0805">Transcription regulation</keyword>
<proteinExistence type="inferred from homology"/>
<evidence type="ECO:0000255" key="1">
    <source>
        <dbReference type="HAMAP-Rule" id="MF_01814"/>
    </source>
</evidence>
<name>FAPR_LISIN</name>
<feature type="chain" id="PRO_0000172823" description="Transcription factor FapR">
    <location>
        <begin position="1"/>
        <end position="189"/>
    </location>
</feature>
<organism>
    <name type="scientific">Listeria innocua serovar 6a (strain ATCC BAA-680 / CLIP 11262)</name>
    <dbReference type="NCBI Taxonomy" id="272626"/>
    <lineage>
        <taxon>Bacteria</taxon>
        <taxon>Bacillati</taxon>
        <taxon>Bacillota</taxon>
        <taxon>Bacilli</taxon>
        <taxon>Bacillales</taxon>
        <taxon>Listeriaceae</taxon>
        <taxon>Listeria</taxon>
    </lineage>
</organism>
<comment type="function">
    <text evidence="1">Transcriptional factor involved in regulation of membrane lipid biosynthesis by repressing genes involved in fatty acid and phospholipid metabolism.</text>
</comment>
<comment type="similarity">
    <text evidence="1">Belongs to the FapR family.</text>
</comment>